<accession>B9NAN0</accession>
<accession>U5FU53</accession>
<dbReference type="EC" id="2.3.1.35" evidence="1"/>
<dbReference type="EC" id="2.3.1.1" evidence="1"/>
<dbReference type="EMBL" id="CM009301">
    <property type="protein sequence ID" value="ERP54763.1"/>
    <property type="molecule type" value="Genomic_DNA"/>
</dbReference>
<dbReference type="RefSeq" id="XP_006376966.1">
    <property type="nucleotide sequence ID" value="XM_006376904.1"/>
</dbReference>
<dbReference type="SMR" id="B9NAN0"/>
<dbReference type="FunCoup" id="B9NAN0">
    <property type="interactions" value="1805"/>
</dbReference>
<dbReference type="STRING" id="3694.B9NAN0"/>
<dbReference type="KEGG" id="pop:18103861"/>
<dbReference type="eggNOG" id="KOG2786">
    <property type="taxonomic scope" value="Eukaryota"/>
</dbReference>
<dbReference type="HOGENOM" id="CLU_027172_1_1_1"/>
<dbReference type="InParanoid" id="B9NAN0"/>
<dbReference type="OrthoDB" id="2017946at2759"/>
<dbReference type="UniPathway" id="UPA00068">
    <property type="reaction ID" value="UER00106"/>
</dbReference>
<dbReference type="UniPathway" id="UPA00068">
    <property type="reaction ID" value="UER00111"/>
</dbReference>
<dbReference type="Proteomes" id="UP000006729">
    <property type="component" value="Chromosome 12"/>
</dbReference>
<dbReference type="ExpressionAtlas" id="B9NAN0">
    <property type="expression patterns" value="baseline and differential"/>
</dbReference>
<dbReference type="GO" id="GO:0009507">
    <property type="term" value="C:chloroplast"/>
    <property type="evidence" value="ECO:0007669"/>
    <property type="project" value="UniProtKB-SubCell"/>
</dbReference>
<dbReference type="GO" id="GO:0004358">
    <property type="term" value="F:glutamate N-acetyltransferase activity"/>
    <property type="evidence" value="ECO:0007669"/>
    <property type="project" value="UniProtKB-UniRule"/>
</dbReference>
<dbReference type="GO" id="GO:0004042">
    <property type="term" value="F:L-glutamate N-acetyltransferase activity"/>
    <property type="evidence" value="ECO:0000318"/>
    <property type="project" value="GO_Central"/>
</dbReference>
<dbReference type="GO" id="GO:0006526">
    <property type="term" value="P:L-arginine biosynthetic process"/>
    <property type="evidence" value="ECO:0007669"/>
    <property type="project" value="UniProtKB-UniRule"/>
</dbReference>
<dbReference type="GO" id="GO:0006592">
    <property type="term" value="P:ornithine biosynthetic process"/>
    <property type="evidence" value="ECO:0000318"/>
    <property type="project" value="GO_Central"/>
</dbReference>
<dbReference type="CDD" id="cd02152">
    <property type="entry name" value="OAT"/>
    <property type="match status" value="1"/>
</dbReference>
<dbReference type="FunFam" id="3.10.20.340:FF:000001">
    <property type="entry name" value="Arginine biosynthesis bifunctional protein ArgJ, chloroplastic"/>
    <property type="match status" value="1"/>
</dbReference>
<dbReference type="FunFam" id="3.60.70.12:FF:000001">
    <property type="entry name" value="Arginine biosynthesis bifunctional protein ArgJ, chloroplastic"/>
    <property type="match status" value="1"/>
</dbReference>
<dbReference type="Gene3D" id="3.10.20.340">
    <property type="entry name" value="ArgJ beta chain, C-terminal domain"/>
    <property type="match status" value="1"/>
</dbReference>
<dbReference type="Gene3D" id="3.60.70.12">
    <property type="entry name" value="L-amino peptidase D-ALA esterase/amidase"/>
    <property type="match status" value="1"/>
</dbReference>
<dbReference type="HAMAP" id="MF_01106">
    <property type="entry name" value="ArgJ"/>
    <property type="match status" value="1"/>
</dbReference>
<dbReference type="InterPro" id="IPR002813">
    <property type="entry name" value="Arg_biosynth_ArgJ"/>
</dbReference>
<dbReference type="InterPro" id="IPR016117">
    <property type="entry name" value="ArgJ-like_dom_sf"/>
</dbReference>
<dbReference type="InterPro" id="IPR042195">
    <property type="entry name" value="ArgJ_beta_C"/>
</dbReference>
<dbReference type="NCBIfam" id="TIGR00120">
    <property type="entry name" value="ArgJ"/>
    <property type="match status" value="1"/>
</dbReference>
<dbReference type="NCBIfam" id="NF003802">
    <property type="entry name" value="PRK05388.1"/>
    <property type="match status" value="1"/>
</dbReference>
<dbReference type="PANTHER" id="PTHR23100">
    <property type="entry name" value="ARGININE BIOSYNTHESIS BIFUNCTIONAL PROTEIN ARGJ"/>
    <property type="match status" value="1"/>
</dbReference>
<dbReference type="PANTHER" id="PTHR23100:SF0">
    <property type="entry name" value="ARGININE BIOSYNTHESIS BIFUNCTIONAL PROTEIN ARGJ, MITOCHONDRIAL"/>
    <property type="match status" value="1"/>
</dbReference>
<dbReference type="Pfam" id="PF01960">
    <property type="entry name" value="ArgJ"/>
    <property type="match status" value="1"/>
</dbReference>
<dbReference type="SUPFAM" id="SSF56266">
    <property type="entry name" value="DmpA/ArgJ-like"/>
    <property type="match status" value="1"/>
</dbReference>
<protein>
    <recommendedName>
        <fullName evidence="1">Arginine biosynthesis bifunctional protein ArgJ, chloroplastic</fullName>
    </recommendedName>
    <domain>
        <recommendedName>
            <fullName evidence="1">Glutamate N-acetyltransferase</fullName>
            <shortName evidence="1">GAT</shortName>
            <ecNumber evidence="1">2.3.1.35</ecNumber>
        </recommendedName>
        <alternativeName>
            <fullName evidence="1">Ornithine acetyltransferase</fullName>
            <shortName evidence="1">OATase</shortName>
        </alternativeName>
        <alternativeName>
            <fullName evidence="1">Ornithine transacetylase</fullName>
        </alternativeName>
    </domain>
    <domain>
        <recommendedName>
            <fullName evidence="1">Amino-acid acetyltransferase</fullName>
            <ecNumber evidence="1">2.3.1.1</ecNumber>
        </recommendedName>
        <alternativeName>
            <fullName evidence="1">N-acetylglutamate synthase</fullName>
            <shortName evidence="1">AGS</shortName>
        </alternativeName>
    </domain>
    <component>
        <recommendedName>
            <fullName evidence="1">Arginine biosynthesis bifunctional protein ArgJ alpha chain</fullName>
        </recommendedName>
    </component>
    <component>
        <recommendedName>
            <fullName evidence="1">Arginine biosynthesis bifunctional protein ArgJ beta chain</fullName>
        </recommendedName>
    </component>
</protein>
<comment type="function">
    <text evidence="1">Catalyzes two activities which are involved in the cyclic version of arginine biosynthesis: the synthesis of acetylglutamate from glutamate and acetyl-CoA, and of ornithine by transacetylation between acetylornithine and glutamate.</text>
</comment>
<comment type="catalytic activity">
    <reaction evidence="1">
        <text>N(2)-acetyl-L-ornithine + L-glutamate = N-acetyl-L-glutamate + L-ornithine</text>
        <dbReference type="Rhea" id="RHEA:15349"/>
        <dbReference type="ChEBI" id="CHEBI:29985"/>
        <dbReference type="ChEBI" id="CHEBI:44337"/>
        <dbReference type="ChEBI" id="CHEBI:46911"/>
        <dbReference type="ChEBI" id="CHEBI:57805"/>
        <dbReference type="EC" id="2.3.1.35"/>
    </reaction>
</comment>
<comment type="catalytic activity">
    <reaction evidence="1">
        <text>L-glutamate + acetyl-CoA = N-acetyl-L-glutamate + CoA + H(+)</text>
        <dbReference type="Rhea" id="RHEA:24292"/>
        <dbReference type="ChEBI" id="CHEBI:15378"/>
        <dbReference type="ChEBI" id="CHEBI:29985"/>
        <dbReference type="ChEBI" id="CHEBI:44337"/>
        <dbReference type="ChEBI" id="CHEBI:57287"/>
        <dbReference type="ChEBI" id="CHEBI:57288"/>
        <dbReference type="EC" id="2.3.1.1"/>
    </reaction>
</comment>
<comment type="pathway">
    <text evidence="1">Amino-acid biosynthesis; L-arginine biosynthesis; L-ornithine and N-acetyl-L-glutamate from L-glutamate and N(2)-acetyl-L-ornithine (cyclic): step 1/1.</text>
</comment>
<comment type="pathway">
    <text evidence="1">Amino-acid biosynthesis; L-arginine biosynthesis; N(2)-acetyl-L-ornithine from L-glutamate: step 1/4.</text>
</comment>
<comment type="subunit">
    <text evidence="1">Heterodimer of an alpha and a beta chain.</text>
</comment>
<comment type="subcellular location">
    <subcellularLocation>
        <location evidence="1">Plastid</location>
        <location evidence="1">Chloroplast</location>
    </subcellularLocation>
</comment>
<comment type="miscellaneous">
    <text evidence="1">This protein may be expected to contain an N-terminal transit peptide but none has been predicted.</text>
</comment>
<comment type="similarity">
    <text evidence="1">Belongs to the ArgJ family.</text>
</comment>
<name>ARGJ_POPTR</name>
<sequence length="481" mass="49837">MHTCAPPHHFSSLKFPELHGSSKLNNLQVLRSFGLSKRSFKVFAVAASSSSSMSEASNYIPAAPIFLPEGPWQQIPGGVTAAKGFKAAGIYGGLRAKGEKPDLALVTCDVDATAAGAFTTNMVAAAPVLYCKNALDISKTARAVLINAGQANAATGDAGYQDVLESVGALAMLLKLKPEEVLIESTGIIGQRIKKGALLNSLPKLVNSLSPSIEGAGSAAVAITTTDLVSKSVAIESQVGGTNIKVGGMAKGSGMIHPNMATMLGVITTDALVNSDVWRKMVQISVNRSFNQITVDGDTSTNDTVIALASGLSGSISISNINCHEAMQLQACLDAVMQGLAKSIAWDGEGATCLIEVTVTGAESEAKAAKIARAVASSSLVKAAVYGRDPNWGRIAAAAGYAGIPFHQNNLRIMLGDILLMDNGQPLSFDRSAASNYLRKAGEIHGTVGIYISVGDGPGSGQAWGCDLSYDYVKINAEYTT</sequence>
<proteinExistence type="inferred from homology"/>
<keyword id="KW-0012">Acyltransferase</keyword>
<keyword id="KW-0028">Amino-acid biosynthesis</keyword>
<keyword id="KW-0055">Arginine biosynthesis</keyword>
<keyword id="KW-0068">Autocatalytic cleavage</keyword>
<keyword id="KW-0150">Chloroplast</keyword>
<keyword id="KW-0511">Multifunctional enzyme</keyword>
<keyword id="KW-0934">Plastid</keyword>
<keyword id="KW-1185">Reference proteome</keyword>
<keyword id="KW-0808">Transferase</keyword>
<organism>
    <name type="scientific">Populus trichocarpa</name>
    <name type="common">Western balsam poplar</name>
    <name type="synonym">Populus balsamifera subsp. trichocarpa</name>
    <dbReference type="NCBI Taxonomy" id="3694"/>
    <lineage>
        <taxon>Eukaryota</taxon>
        <taxon>Viridiplantae</taxon>
        <taxon>Streptophyta</taxon>
        <taxon>Embryophyta</taxon>
        <taxon>Tracheophyta</taxon>
        <taxon>Spermatophyta</taxon>
        <taxon>Magnoliopsida</taxon>
        <taxon>eudicotyledons</taxon>
        <taxon>Gunneridae</taxon>
        <taxon>Pentapetalae</taxon>
        <taxon>rosids</taxon>
        <taxon>fabids</taxon>
        <taxon>Malpighiales</taxon>
        <taxon>Salicaceae</taxon>
        <taxon>Saliceae</taxon>
        <taxon>Populus</taxon>
    </lineage>
</organism>
<feature type="chain" id="PRO_0000397986" description="Arginine biosynthesis bifunctional protein ArgJ alpha chain" evidence="1">
    <location>
        <begin position="1"/>
        <end position="261"/>
    </location>
</feature>
<feature type="chain" id="PRO_0000397987" description="Arginine biosynthesis bifunctional protein ArgJ beta chain" evidence="1">
    <location>
        <begin position="262"/>
        <end position="481"/>
    </location>
</feature>
<feature type="active site" description="Nucleophile" evidence="1">
    <location>
        <position position="262"/>
    </location>
</feature>
<feature type="binding site" evidence="1">
    <location>
        <position position="225"/>
    </location>
    <ligand>
        <name>substrate</name>
    </ligand>
</feature>
<feature type="binding site" evidence="1">
    <location>
        <position position="251"/>
    </location>
    <ligand>
        <name>substrate</name>
    </ligand>
</feature>
<feature type="binding site" evidence="1">
    <location>
        <position position="262"/>
    </location>
    <ligand>
        <name>substrate</name>
    </ligand>
</feature>
<feature type="binding site" evidence="1">
    <location>
        <position position="349"/>
    </location>
    <ligand>
        <name>substrate</name>
    </ligand>
</feature>
<feature type="binding site" evidence="1">
    <location>
        <position position="476"/>
    </location>
    <ligand>
        <name>substrate</name>
    </ligand>
</feature>
<feature type="binding site" evidence="1">
    <location>
        <position position="481"/>
    </location>
    <ligand>
        <name>substrate</name>
    </ligand>
</feature>
<feature type="site" description="Involved in the stabilization of negative charge on the oxyanion by the formation of the oxyanion hole" evidence="1">
    <location>
        <position position="186"/>
    </location>
</feature>
<feature type="site" description="Involved in the stabilization of negative charge on the oxyanion by the formation of the oxyanion hole" evidence="1">
    <location>
        <position position="187"/>
    </location>
</feature>
<feature type="site" description="Cleavage; by autolysis" evidence="1">
    <location>
        <begin position="261"/>
        <end position="262"/>
    </location>
</feature>
<reference key="1">
    <citation type="journal article" date="2006" name="Science">
        <title>The genome of black cottonwood, Populus trichocarpa (Torr. &amp; Gray).</title>
        <authorList>
            <person name="Tuskan G.A."/>
            <person name="Difazio S."/>
            <person name="Jansson S."/>
            <person name="Bohlmann J."/>
            <person name="Grigoriev I."/>
            <person name="Hellsten U."/>
            <person name="Putnam N."/>
            <person name="Ralph S."/>
            <person name="Rombauts S."/>
            <person name="Salamov A."/>
            <person name="Schein J."/>
            <person name="Sterck L."/>
            <person name="Aerts A."/>
            <person name="Bhalerao R.R."/>
            <person name="Bhalerao R.P."/>
            <person name="Blaudez D."/>
            <person name="Boerjan W."/>
            <person name="Brun A."/>
            <person name="Brunner A."/>
            <person name="Busov V."/>
            <person name="Campbell M."/>
            <person name="Carlson J."/>
            <person name="Chalot M."/>
            <person name="Chapman J."/>
            <person name="Chen G.-L."/>
            <person name="Cooper D."/>
            <person name="Coutinho P.M."/>
            <person name="Couturier J."/>
            <person name="Covert S."/>
            <person name="Cronk Q."/>
            <person name="Cunningham R."/>
            <person name="Davis J."/>
            <person name="Degroeve S."/>
            <person name="Dejardin A."/>
            <person name="dePamphilis C.W."/>
            <person name="Detter J."/>
            <person name="Dirks B."/>
            <person name="Dubchak I."/>
            <person name="Duplessis S."/>
            <person name="Ehlting J."/>
            <person name="Ellis B."/>
            <person name="Gendler K."/>
            <person name="Goodstein D."/>
            <person name="Gribskov M."/>
            <person name="Grimwood J."/>
            <person name="Groover A."/>
            <person name="Gunter L."/>
            <person name="Hamberger B."/>
            <person name="Heinze B."/>
            <person name="Helariutta Y."/>
            <person name="Henrissat B."/>
            <person name="Holligan D."/>
            <person name="Holt R."/>
            <person name="Huang W."/>
            <person name="Islam-Faridi N."/>
            <person name="Jones S."/>
            <person name="Jones-Rhoades M."/>
            <person name="Jorgensen R."/>
            <person name="Joshi C."/>
            <person name="Kangasjaervi J."/>
            <person name="Karlsson J."/>
            <person name="Kelleher C."/>
            <person name="Kirkpatrick R."/>
            <person name="Kirst M."/>
            <person name="Kohler A."/>
            <person name="Kalluri U."/>
            <person name="Larimer F."/>
            <person name="Leebens-Mack J."/>
            <person name="Leple J.-C."/>
            <person name="Locascio P."/>
            <person name="Lou Y."/>
            <person name="Lucas S."/>
            <person name="Martin F."/>
            <person name="Montanini B."/>
            <person name="Napoli C."/>
            <person name="Nelson D.R."/>
            <person name="Nelson C."/>
            <person name="Nieminen K."/>
            <person name="Nilsson O."/>
            <person name="Pereda V."/>
            <person name="Peter G."/>
            <person name="Philippe R."/>
            <person name="Pilate G."/>
            <person name="Poliakov A."/>
            <person name="Razumovskaya J."/>
            <person name="Richardson P."/>
            <person name="Rinaldi C."/>
            <person name="Ritland K."/>
            <person name="Rouze P."/>
            <person name="Ryaboy D."/>
            <person name="Schmutz J."/>
            <person name="Schrader J."/>
            <person name="Segerman B."/>
            <person name="Shin H."/>
            <person name="Siddiqui A."/>
            <person name="Sterky F."/>
            <person name="Terry A."/>
            <person name="Tsai C.-J."/>
            <person name="Uberbacher E."/>
            <person name="Unneberg P."/>
            <person name="Vahala J."/>
            <person name="Wall K."/>
            <person name="Wessler S."/>
            <person name="Yang G."/>
            <person name="Yin T."/>
            <person name="Douglas C."/>
            <person name="Marra M."/>
            <person name="Sandberg G."/>
            <person name="Van de Peer Y."/>
            <person name="Rokhsar D.S."/>
        </authorList>
    </citation>
    <scope>NUCLEOTIDE SEQUENCE [LARGE SCALE GENOMIC DNA]</scope>
    <source>
        <strain>cv. Nisqually</strain>
    </source>
</reference>
<reference key="2">
    <citation type="submission" date="2008-12" db="EMBL/GenBank/DDBJ databases">
        <authorList>
            <consortium name="US DOE Joint Genome Institute (JGI-PGF)"/>
            <person name="Grigoriev I.V."/>
            <person name="Terry A."/>
            <person name="Salamov A.A."/>
            <person name="Otillar R."/>
            <person name="Lou Y."/>
            <person name="Lucas S."/>
            <person name="Hammon N."/>
            <person name="Glavina del Rio T."/>
            <person name="Detter J."/>
            <person name="Kalin E."/>
            <person name="Tice H."/>
            <person name="Pitluck S."/>
            <person name="Chapman J."/>
            <person name="Putnam N.H."/>
            <person name="Brunner A."/>
            <person name="Busov V."/>
            <person name="Campbell M."/>
            <person name="Chalot M."/>
            <person name="Covert S."/>
            <person name="Davis J."/>
            <person name="DiFazio S."/>
            <person name="Gribskov M."/>
            <person name="Gunter L."/>
            <person name="Hamberger B."/>
            <person name="Jansson S."/>
            <person name="Joshi C."/>
            <person name="Larimer F."/>
            <person name="Martin F."/>
            <person name="Napoli C."/>
            <person name="Nelson D."/>
            <person name="Ralph S."/>
            <person name="Rombauts S."/>
            <person name="Rouze P."/>
            <person name="Schrader J."/>
            <person name="Tsai C."/>
            <person name="Vahala J."/>
            <person name="Tuskan G."/>
            <person name="Rokhsar D."/>
        </authorList>
    </citation>
    <scope>GENOME REANNOTATION</scope>
    <source>
        <strain>cv. Nisqually</strain>
    </source>
</reference>
<gene>
    <name type="ORF">POPTRDRAFT_746969</name>
</gene>
<evidence type="ECO:0000255" key="1">
    <source>
        <dbReference type="HAMAP-Rule" id="MF_03124"/>
    </source>
</evidence>